<reference key="1">
    <citation type="journal article" date="1993" name="Plant Mol. Biol.">
        <title>Molecular cloning and analysis of a cDNA coding for the bifunctional dihydrofolate reductase-thymidylate synthase of Daucus carota.</title>
        <authorList>
            <person name="Luo M."/>
            <person name="Piffanelli P."/>
            <person name="Rastelli L."/>
            <person name="Cella R."/>
        </authorList>
    </citation>
    <scope>NUCLEOTIDE SEQUENCE [MRNA]</scope>
    <source>
        <strain>cv. Lunga di Amsterdam</strain>
    </source>
</reference>
<dbReference type="EC" id="1.5.1.3"/>
<dbReference type="EC" id="2.1.1.45"/>
<dbReference type="EMBL" id="Z17306">
    <property type="protein sequence ID" value="CAA78954.1"/>
    <property type="molecule type" value="mRNA"/>
</dbReference>
<dbReference type="PIR" id="S35272">
    <property type="entry name" value="S35272"/>
</dbReference>
<dbReference type="SMR" id="P45350"/>
<dbReference type="UniPathway" id="UPA00077">
    <property type="reaction ID" value="UER00158"/>
</dbReference>
<dbReference type="GO" id="GO:0005829">
    <property type="term" value="C:cytosol"/>
    <property type="evidence" value="ECO:0007669"/>
    <property type="project" value="TreeGrafter"/>
</dbReference>
<dbReference type="GO" id="GO:0005739">
    <property type="term" value="C:mitochondrion"/>
    <property type="evidence" value="ECO:0007669"/>
    <property type="project" value="TreeGrafter"/>
</dbReference>
<dbReference type="GO" id="GO:0004146">
    <property type="term" value="F:dihydrofolate reductase activity"/>
    <property type="evidence" value="ECO:0007669"/>
    <property type="project" value="UniProtKB-EC"/>
</dbReference>
<dbReference type="GO" id="GO:0004799">
    <property type="term" value="F:thymidylate synthase activity"/>
    <property type="evidence" value="ECO:0007669"/>
    <property type="project" value="UniProtKB-EC"/>
</dbReference>
<dbReference type="GO" id="GO:0006231">
    <property type="term" value="P:dTMP biosynthetic process"/>
    <property type="evidence" value="ECO:0007669"/>
    <property type="project" value="InterPro"/>
</dbReference>
<dbReference type="GO" id="GO:0032259">
    <property type="term" value="P:methylation"/>
    <property type="evidence" value="ECO:0007669"/>
    <property type="project" value="UniProtKB-KW"/>
</dbReference>
<dbReference type="GO" id="GO:0006730">
    <property type="term" value="P:one-carbon metabolic process"/>
    <property type="evidence" value="ECO:0007669"/>
    <property type="project" value="UniProtKB-KW"/>
</dbReference>
<dbReference type="GO" id="GO:0046654">
    <property type="term" value="P:tetrahydrofolate biosynthetic process"/>
    <property type="evidence" value="ECO:0007669"/>
    <property type="project" value="UniProtKB-UniPathway"/>
</dbReference>
<dbReference type="CDD" id="cd00209">
    <property type="entry name" value="DHFR"/>
    <property type="match status" value="1"/>
</dbReference>
<dbReference type="CDD" id="cd00351">
    <property type="entry name" value="TS_Pyrimidine_HMase"/>
    <property type="match status" value="1"/>
</dbReference>
<dbReference type="FunFam" id="3.40.430.10:FF:000003">
    <property type="entry name" value="Bifunctional dihydrofolate reductase-thymidylate synthase"/>
    <property type="match status" value="1"/>
</dbReference>
<dbReference type="FunFam" id="3.30.572.10:FF:000002">
    <property type="entry name" value="Possible thymidylate synthase"/>
    <property type="match status" value="1"/>
</dbReference>
<dbReference type="Gene3D" id="3.40.430.10">
    <property type="entry name" value="Dihydrofolate Reductase, subunit A"/>
    <property type="match status" value="1"/>
</dbReference>
<dbReference type="Gene3D" id="3.30.572.10">
    <property type="entry name" value="Thymidylate synthase/dCMP hydroxymethylase domain"/>
    <property type="match status" value="1"/>
</dbReference>
<dbReference type="HAMAP" id="MF_00008">
    <property type="entry name" value="Thymidy_synth_bact"/>
    <property type="match status" value="1"/>
</dbReference>
<dbReference type="InterPro" id="IPR024072">
    <property type="entry name" value="DHFR-like_dom_sf"/>
</dbReference>
<dbReference type="InterPro" id="IPR012262">
    <property type="entry name" value="DHFR-TS"/>
</dbReference>
<dbReference type="InterPro" id="IPR017925">
    <property type="entry name" value="DHFR_CS"/>
</dbReference>
<dbReference type="InterPro" id="IPR001796">
    <property type="entry name" value="DHFR_dom"/>
</dbReference>
<dbReference type="InterPro" id="IPR045097">
    <property type="entry name" value="Thymidate_synth/dCMP_Mease"/>
</dbReference>
<dbReference type="InterPro" id="IPR023451">
    <property type="entry name" value="Thymidate_synth/dCMP_Mease_dom"/>
</dbReference>
<dbReference type="InterPro" id="IPR036926">
    <property type="entry name" value="Thymidate_synth/dCMP_Mease_sf"/>
</dbReference>
<dbReference type="InterPro" id="IPR000398">
    <property type="entry name" value="Thymidylate_synthase"/>
</dbReference>
<dbReference type="InterPro" id="IPR020940">
    <property type="entry name" value="Thymidylate_synthase_AS"/>
</dbReference>
<dbReference type="NCBIfam" id="NF002497">
    <property type="entry name" value="PRK01827.1-3"/>
    <property type="match status" value="1"/>
</dbReference>
<dbReference type="NCBIfam" id="TIGR03284">
    <property type="entry name" value="thym_sym"/>
    <property type="match status" value="1"/>
</dbReference>
<dbReference type="PANTHER" id="PTHR11548:SF2">
    <property type="entry name" value="THYMIDYLATE SYNTHASE"/>
    <property type="match status" value="1"/>
</dbReference>
<dbReference type="PANTHER" id="PTHR11548">
    <property type="entry name" value="THYMIDYLATE SYNTHASE 1"/>
    <property type="match status" value="1"/>
</dbReference>
<dbReference type="Pfam" id="PF00186">
    <property type="entry name" value="DHFR_1"/>
    <property type="match status" value="1"/>
</dbReference>
<dbReference type="Pfam" id="PF00303">
    <property type="entry name" value="Thymidylat_synt"/>
    <property type="match status" value="1"/>
</dbReference>
<dbReference type="PIRSF" id="PIRSF000389">
    <property type="entry name" value="DHFR-TS"/>
    <property type="match status" value="1"/>
</dbReference>
<dbReference type="PRINTS" id="PR00108">
    <property type="entry name" value="THYMDSNTHASE"/>
</dbReference>
<dbReference type="SUPFAM" id="SSF53597">
    <property type="entry name" value="Dihydrofolate reductase-like"/>
    <property type="match status" value="1"/>
</dbReference>
<dbReference type="SUPFAM" id="SSF55831">
    <property type="entry name" value="Thymidylate synthase/dCMP hydroxymethylase"/>
    <property type="match status" value="1"/>
</dbReference>
<dbReference type="PROSITE" id="PS00075">
    <property type="entry name" value="DHFR_1"/>
    <property type="match status" value="1"/>
</dbReference>
<dbReference type="PROSITE" id="PS51330">
    <property type="entry name" value="DHFR_2"/>
    <property type="match status" value="1"/>
</dbReference>
<dbReference type="PROSITE" id="PS00091">
    <property type="entry name" value="THYMIDYLATE_SYNTHASE"/>
    <property type="match status" value="1"/>
</dbReference>
<organism>
    <name type="scientific">Daucus carota</name>
    <name type="common">Wild carrot</name>
    <dbReference type="NCBI Taxonomy" id="4039"/>
    <lineage>
        <taxon>Eukaryota</taxon>
        <taxon>Viridiplantae</taxon>
        <taxon>Streptophyta</taxon>
        <taxon>Embryophyta</taxon>
        <taxon>Tracheophyta</taxon>
        <taxon>Spermatophyta</taxon>
        <taxon>Magnoliopsida</taxon>
        <taxon>eudicotyledons</taxon>
        <taxon>Gunneridae</taxon>
        <taxon>Pentapetalae</taxon>
        <taxon>asterids</taxon>
        <taxon>campanulids</taxon>
        <taxon>Apiales</taxon>
        <taxon>Apiaceae</taxon>
        <taxon>Apioideae</taxon>
        <taxon>Scandiceae</taxon>
        <taxon>Daucinae</taxon>
        <taxon>Daucus</taxon>
        <taxon>Daucus sect. Daucus</taxon>
    </lineage>
</organism>
<keyword id="KW-0489">Methyltransferase</keyword>
<keyword id="KW-0511">Multifunctional enzyme</keyword>
<keyword id="KW-0521">NADP</keyword>
<keyword id="KW-0545">Nucleotide biosynthesis</keyword>
<keyword id="KW-0554">One-carbon metabolism</keyword>
<keyword id="KW-0560">Oxidoreductase</keyword>
<keyword id="KW-0808">Transferase</keyword>
<accession>P45350</accession>
<name>DRTS_DAUCA</name>
<comment type="function">
    <text evidence="1">Bifunctional enzyme. Involved in de novo dTMP biosynthesis. Key enzyme in folate metabolism. Can play two different roles depending on the source of dihydrofolate: de novo synthesis of tetrahydrofolate or recycling of the dihydrofolate released as one of the end products of the TS catalyzed reaction. Catalyzes an essential reaction for de novo glycine and purine synthesis, DNA precursor synthesis, and for the conversion of dUMP to dTMP (By similarity).</text>
</comment>
<comment type="catalytic activity">
    <reaction>
        <text>(6S)-5,6,7,8-tetrahydrofolate + NADP(+) = 7,8-dihydrofolate + NADPH + H(+)</text>
        <dbReference type="Rhea" id="RHEA:15009"/>
        <dbReference type="ChEBI" id="CHEBI:15378"/>
        <dbReference type="ChEBI" id="CHEBI:57451"/>
        <dbReference type="ChEBI" id="CHEBI:57453"/>
        <dbReference type="ChEBI" id="CHEBI:57783"/>
        <dbReference type="ChEBI" id="CHEBI:58349"/>
        <dbReference type="EC" id="1.5.1.3"/>
    </reaction>
</comment>
<comment type="catalytic activity">
    <reaction>
        <text>dUMP + (6R)-5,10-methylene-5,6,7,8-tetrahydrofolate = 7,8-dihydrofolate + dTMP</text>
        <dbReference type="Rhea" id="RHEA:12104"/>
        <dbReference type="ChEBI" id="CHEBI:15636"/>
        <dbReference type="ChEBI" id="CHEBI:57451"/>
        <dbReference type="ChEBI" id="CHEBI:63528"/>
        <dbReference type="ChEBI" id="CHEBI:246422"/>
        <dbReference type="EC" id="2.1.1.45"/>
    </reaction>
</comment>
<comment type="pathway">
    <text>Cofactor biosynthesis; tetrahydrofolate biosynthesis; 5,6,7,8-tetrahydrofolate from 7,8-dihydrofolate: step 1/1.</text>
</comment>
<comment type="similarity">
    <text evidence="3">In the N-terminal section; belongs to the dihydrofolate reductase family.</text>
</comment>
<comment type="similarity">
    <text evidence="3">In the C-terminal section; belongs to the thymidylate synthase family.</text>
</comment>
<proteinExistence type="evidence at transcript level"/>
<protein>
    <recommendedName>
        <fullName>Bifunctional dihydrofolate reductase-thymidylate synthase</fullName>
        <shortName>DHFR-TS</shortName>
    </recommendedName>
    <domain>
        <recommendedName>
            <fullName>Dihydrofolate reductase</fullName>
            <ecNumber>1.5.1.3</ecNumber>
        </recommendedName>
    </domain>
    <domain>
        <recommendedName>
            <fullName>Thymidylate synthase</fullName>
            <ecNumber>2.1.1.45</ecNumber>
        </recommendedName>
    </domain>
</protein>
<evidence type="ECO:0000250" key="1"/>
<evidence type="ECO:0000256" key="2">
    <source>
        <dbReference type="SAM" id="MobiDB-lite"/>
    </source>
</evidence>
<evidence type="ECO:0000305" key="3"/>
<feature type="chain" id="PRO_0000186357" description="Bifunctional dihydrofolate reductase-thymidylate synthase">
    <location>
        <begin position="1"/>
        <end position="528"/>
    </location>
</feature>
<feature type="domain" description="DHFR">
    <location>
        <begin position="23"/>
        <end position="200"/>
    </location>
</feature>
<feature type="region of interest" description="Disordered" evidence="2">
    <location>
        <begin position="1"/>
        <end position="20"/>
    </location>
</feature>
<feature type="region of interest" description="Thymidylate synthase">
    <location>
        <begin position="202"/>
        <end position="528"/>
    </location>
</feature>
<feature type="active site" evidence="1">
    <location>
        <position position="409"/>
    </location>
</feature>
<feature type="binding site" evidence="1">
    <location>
        <position position="27"/>
    </location>
    <ligand>
        <name>substrate</name>
    </ligand>
</feature>
<feature type="binding site" evidence="1">
    <location>
        <position position="29"/>
    </location>
    <ligand>
        <name>NADP(+)</name>
        <dbReference type="ChEBI" id="CHEBI:58349"/>
    </ligand>
</feature>
<feature type="binding site" evidence="1">
    <location>
        <begin position="35"/>
        <end position="41"/>
    </location>
    <ligand>
        <name>NADP(+)</name>
        <dbReference type="ChEBI" id="CHEBI:58349"/>
    </ligand>
</feature>
<feature type="binding site" evidence="1">
    <location>
        <position position="49"/>
    </location>
    <ligand>
        <name>substrate</name>
    </ligand>
</feature>
<feature type="binding site" evidence="1">
    <location>
        <begin position="73"/>
        <end position="75"/>
    </location>
    <ligand>
        <name>NADP(+)</name>
        <dbReference type="ChEBI" id="CHEBI:58349"/>
    </ligand>
</feature>
<feature type="binding site" evidence="1">
    <location>
        <begin position="94"/>
        <end position="97"/>
    </location>
    <ligand>
        <name>NADP(+)</name>
        <dbReference type="ChEBI" id="CHEBI:58349"/>
    </ligand>
</feature>
<feature type="binding site" evidence="1">
    <location>
        <position position="136"/>
    </location>
    <ligand>
        <name>substrate</name>
    </ligand>
</feature>
<feature type="binding site" evidence="1">
    <location>
        <begin position="137"/>
        <end position="144"/>
    </location>
    <ligand>
        <name>NADP(+)</name>
        <dbReference type="ChEBI" id="CHEBI:58349"/>
    </ligand>
</feature>
<feature type="binding site" evidence="1">
    <location>
        <position position="142"/>
    </location>
    <ligand>
        <name>substrate</name>
    </ligand>
</feature>
<feature type="binding site" evidence="1">
    <location>
        <position position="157"/>
    </location>
    <ligand>
        <name>substrate</name>
    </ligand>
</feature>
<feature type="binding site" evidence="1">
    <location>
        <position position="264"/>
    </location>
    <ligand>
        <name>dUMP</name>
        <dbReference type="ChEBI" id="CHEBI:246422"/>
    </ligand>
</feature>
<feature type="binding site" evidence="1">
    <location>
        <position position="410"/>
    </location>
    <ligand>
        <name>dUMP</name>
        <dbReference type="ChEBI" id="CHEBI:246422"/>
    </ligand>
</feature>
<feature type="binding site" evidence="1">
    <location>
        <begin position="428"/>
        <end position="432"/>
    </location>
    <ligand>
        <name>dUMP</name>
        <dbReference type="ChEBI" id="CHEBI:246422"/>
    </ligand>
</feature>
<feature type="binding site" evidence="1">
    <location>
        <position position="440"/>
    </location>
    <ligand>
        <name>dUMP</name>
        <dbReference type="ChEBI" id="CHEBI:246422"/>
    </ligand>
</feature>
<feature type="binding site" evidence="1">
    <location>
        <begin position="470"/>
        <end position="472"/>
    </location>
    <ligand>
        <name>dUMP</name>
        <dbReference type="ChEBI" id="CHEBI:246422"/>
    </ligand>
</feature>
<sequence>MASELLANPTNGSGITRPDPQRTYQVVVAATQNMGIGKDGKLPWRLPSDMKFFKDVTMTTSDPLKRNAVIMGRKTWESIPIQHRPLPGRLNVVLTRSGSFDIATVENVVICGSMISALELLAGSPYCVSVEKVFVIGGGQIYREALNAPGCDAVHITEIEEHIECDTFIPLLDESVFQPWYSSFPLVENKIRYCFTTYVRVRNSVAELTSQTNGCSSDSKSDSGNFEIQNFSFLPKTVFEKHEEYLYLGLVENIISNGVTKNDRTRTGTVSIFGCQMRFNLRKSFPLLTTKKVFWRGVVEELLWFISGSTNAKILKEKGVNIWEGNGSREYLDSIGLTDREEGDLGPIYGFQWRHFGARYTDMHADYSGQGFDQLLDVISKIKNNPDDRRIIQSAWNPSDLRLMALPPCHMFAQFYVANGELSCQMYQRSADMGLGVPFNIAAYALLTCMIAHVCDLVPGDFVHSIGDAHVYSNHLSDLFETSFRMLPKTFPVLKINSGEKDIDSFEAADFKLIGYDPHQKIEMKMAV</sequence>